<evidence type="ECO:0000255" key="1">
    <source>
        <dbReference type="HAMAP-Rule" id="MF_01367"/>
    </source>
</evidence>
<evidence type="ECO:0000305" key="2"/>
<comment type="function">
    <text evidence="1">Binds to 23S rRNA. Forms part of two intersubunit bridges in the 70S ribosome.</text>
</comment>
<comment type="subunit">
    <text evidence="1">Part of the 50S ribosomal subunit. Forms a cluster with proteins L3 and L19. In the 70S ribosome, L14 and L19 interact and together make contacts with the 16S rRNA in bridges B5 and B8.</text>
</comment>
<comment type="similarity">
    <text evidence="1">Belongs to the universal ribosomal protein uL14 family.</text>
</comment>
<feature type="chain" id="PRO_1000055660" description="Large ribosomal subunit protein uL14">
    <location>
        <begin position="1"/>
        <end position="122"/>
    </location>
</feature>
<dbReference type="EMBL" id="BX908798">
    <property type="protein sequence ID" value="CAF23146.1"/>
    <property type="molecule type" value="Genomic_DNA"/>
</dbReference>
<dbReference type="RefSeq" id="WP_011174972.1">
    <property type="nucleotide sequence ID" value="NC_005861.2"/>
</dbReference>
<dbReference type="SMR" id="Q6ME53"/>
<dbReference type="STRING" id="264201.pc0422"/>
<dbReference type="KEGG" id="pcu:PC_RS02060"/>
<dbReference type="eggNOG" id="COG0093">
    <property type="taxonomic scope" value="Bacteria"/>
</dbReference>
<dbReference type="HOGENOM" id="CLU_095071_2_1_0"/>
<dbReference type="OrthoDB" id="9806379at2"/>
<dbReference type="Proteomes" id="UP000000529">
    <property type="component" value="Chromosome"/>
</dbReference>
<dbReference type="GO" id="GO:0022625">
    <property type="term" value="C:cytosolic large ribosomal subunit"/>
    <property type="evidence" value="ECO:0007669"/>
    <property type="project" value="TreeGrafter"/>
</dbReference>
<dbReference type="GO" id="GO:0070180">
    <property type="term" value="F:large ribosomal subunit rRNA binding"/>
    <property type="evidence" value="ECO:0007669"/>
    <property type="project" value="TreeGrafter"/>
</dbReference>
<dbReference type="GO" id="GO:0003735">
    <property type="term" value="F:structural constituent of ribosome"/>
    <property type="evidence" value="ECO:0007669"/>
    <property type="project" value="InterPro"/>
</dbReference>
<dbReference type="GO" id="GO:0006412">
    <property type="term" value="P:translation"/>
    <property type="evidence" value="ECO:0007669"/>
    <property type="project" value="UniProtKB-UniRule"/>
</dbReference>
<dbReference type="CDD" id="cd00337">
    <property type="entry name" value="Ribosomal_uL14"/>
    <property type="match status" value="1"/>
</dbReference>
<dbReference type="FunFam" id="2.40.150.20:FF:000001">
    <property type="entry name" value="50S ribosomal protein L14"/>
    <property type="match status" value="1"/>
</dbReference>
<dbReference type="Gene3D" id="2.40.150.20">
    <property type="entry name" value="Ribosomal protein L14"/>
    <property type="match status" value="1"/>
</dbReference>
<dbReference type="HAMAP" id="MF_01367">
    <property type="entry name" value="Ribosomal_uL14"/>
    <property type="match status" value="1"/>
</dbReference>
<dbReference type="InterPro" id="IPR000218">
    <property type="entry name" value="Ribosomal_uL14"/>
</dbReference>
<dbReference type="InterPro" id="IPR005745">
    <property type="entry name" value="Ribosomal_uL14_bac-type"/>
</dbReference>
<dbReference type="InterPro" id="IPR036853">
    <property type="entry name" value="Ribosomal_uL14_sf"/>
</dbReference>
<dbReference type="NCBIfam" id="TIGR01067">
    <property type="entry name" value="rplN_bact"/>
    <property type="match status" value="1"/>
</dbReference>
<dbReference type="PANTHER" id="PTHR11761">
    <property type="entry name" value="50S/60S RIBOSOMAL PROTEIN L14/L23"/>
    <property type="match status" value="1"/>
</dbReference>
<dbReference type="PANTHER" id="PTHR11761:SF3">
    <property type="entry name" value="LARGE RIBOSOMAL SUBUNIT PROTEIN UL14M"/>
    <property type="match status" value="1"/>
</dbReference>
<dbReference type="Pfam" id="PF00238">
    <property type="entry name" value="Ribosomal_L14"/>
    <property type="match status" value="1"/>
</dbReference>
<dbReference type="SMART" id="SM01374">
    <property type="entry name" value="Ribosomal_L14"/>
    <property type="match status" value="1"/>
</dbReference>
<dbReference type="SUPFAM" id="SSF50193">
    <property type="entry name" value="Ribosomal protein L14"/>
    <property type="match status" value="1"/>
</dbReference>
<organism>
    <name type="scientific">Protochlamydia amoebophila (strain UWE25)</name>
    <dbReference type="NCBI Taxonomy" id="264201"/>
    <lineage>
        <taxon>Bacteria</taxon>
        <taxon>Pseudomonadati</taxon>
        <taxon>Chlamydiota</taxon>
        <taxon>Chlamydiia</taxon>
        <taxon>Parachlamydiales</taxon>
        <taxon>Parachlamydiaceae</taxon>
        <taxon>Candidatus Protochlamydia</taxon>
    </lineage>
</organism>
<gene>
    <name evidence="1" type="primary">rplN</name>
    <name type="ordered locus">pc0422</name>
</gene>
<name>RL14_PARUW</name>
<protein>
    <recommendedName>
        <fullName evidence="1">Large ribosomal subunit protein uL14</fullName>
    </recommendedName>
    <alternativeName>
        <fullName evidence="2">50S ribosomal protein L14</fullName>
    </alternativeName>
</protein>
<sequence length="122" mass="13553">MIQQESELEVADNSGAKRVKCFKVLGGSKRRYAHVGDIVVASVQDAHPEGSVKKGDVVKVVIIRTKSYIKRKDGTKIRFDTNSCVLIDDKKNPKGTRIFGPVAREVRDRDFLKISSLAPEVI</sequence>
<accession>Q6ME53</accession>
<keyword id="KW-1185">Reference proteome</keyword>
<keyword id="KW-0687">Ribonucleoprotein</keyword>
<keyword id="KW-0689">Ribosomal protein</keyword>
<keyword id="KW-0694">RNA-binding</keyword>
<keyword id="KW-0699">rRNA-binding</keyword>
<proteinExistence type="inferred from homology"/>
<reference key="1">
    <citation type="journal article" date="2004" name="Science">
        <title>Illuminating the evolutionary history of chlamydiae.</title>
        <authorList>
            <person name="Horn M."/>
            <person name="Collingro A."/>
            <person name="Schmitz-Esser S."/>
            <person name="Beier C.L."/>
            <person name="Purkhold U."/>
            <person name="Fartmann B."/>
            <person name="Brandt P."/>
            <person name="Nyakatura G.J."/>
            <person name="Droege M."/>
            <person name="Frishman D."/>
            <person name="Rattei T."/>
            <person name="Mewes H.-W."/>
            <person name="Wagner M."/>
        </authorList>
    </citation>
    <scope>NUCLEOTIDE SEQUENCE [LARGE SCALE GENOMIC DNA]</scope>
    <source>
        <strain>UWE25</strain>
    </source>
</reference>